<proteinExistence type="inferred from homology"/>
<keyword id="KW-0997">Cell inner membrane</keyword>
<keyword id="KW-1003">Cell membrane</keyword>
<keyword id="KW-0201">Cytochrome c-type biogenesis</keyword>
<keyword id="KW-0349">Heme</keyword>
<keyword id="KW-0408">Iron</keyword>
<keyword id="KW-0472">Membrane</keyword>
<keyword id="KW-0479">Metal-binding</keyword>
<keyword id="KW-1185">Reference proteome</keyword>
<keyword id="KW-0735">Signal-anchor</keyword>
<keyword id="KW-0812">Transmembrane</keyword>
<keyword id="KW-1133">Transmembrane helix</keyword>
<protein>
    <recommendedName>
        <fullName evidence="1">Cytochrome c-type biogenesis protein CcmE</fullName>
    </recommendedName>
    <alternativeName>
        <fullName evidence="1">Cytochrome c maturation protein E</fullName>
    </alternativeName>
    <alternativeName>
        <fullName evidence="1">Heme chaperone CcmE</fullName>
    </alternativeName>
</protein>
<organism>
    <name type="scientific">Shigella dysenteriae serotype 1 (strain Sd197)</name>
    <dbReference type="NCBI Taxonomy" id="300267"/>
    <lineage>
        <taxon>Bacteria</taxon>
        <taxon>Pseudomonadati</taxon>
        <taxon>Pseudomonadota</taxon>
        <taxon>Gammaproteobacteria</taxon>
        <taxon>Enterobacterales</taxon>
        <taxon>Enterobacteriaceae</taxon>
        <taxon>Shigella</taxon>
    </lineage>
</organism>
<sequence length="159" mass="17698">MNIRRKNRLWIACAVLAGLALTIGLVLYALRSNIDLFYTPGEILYGKRETQQMPEVGQRLRVGGMVMPGSVQRDPNSLKVTFTIYDAEGSVDVSYEGILPDLFREGQGVVVQGELEKGNHILAKEVLAKHDENYTPPEVEKAMEANHRRPASVYKDPAS</sequence>
<comment type="function">
    <text evidence="1">Heme chaperone required for the biogenesis of c-type cytochromes. Transiently binds heme delivered by CcmC and transfers the heme to apo-cytochromes in a process facilitated by CcmF and CcmH.</text>
</comment>
<comment type="subcellular location">
    <subcellularLocation>
        <location evidence="1">Cell inner membrane</location>
        <topology evidence="1">Single-pass type II membrane protein</topology>
        <orientation evidence="1">Periplasmic side</orientation>
    </subcellularLocation>
</comment>
<comment type="similarity">
    <text evidence="1">Belongs to the CcmE/CycJ family.</text>
</comment>
<evidence type="ECO:0000255" key="1">
    <source>
        <dbReference type="HAMAP-Rule" id="MF_01959"/>
    </source>
</evidence>
<evidence type="ECO:0000256" key="2">
    <source>
        <dbReference type="SAM" id="MobiDB-lite"/>
    </source>
</evidence>
<reference key="1">
    <citation type="journal article" date="2005" name="Nucleic Acids Res.">
        <title>Genome dynamics and diversity of Shigella species, the etiologic agents of bacillary dysentery.</title>
        <authorList>
            <person name="Yang F."/>
            <person name="Yang J."/>
            <person name="Zhang X."/>
            <person name="Chen L."/>
            <person name="Jiang Y."/>
            <person name="Yan Y."/>
            <person name="Tang X."/>
            <person name="Wang J."/>
            <person name="Xiong Z."/>
            <person name="Dong J."/>
            <person name="Xue Y."/>
            <person name="Zhu Y."/>
            <person name="Xu X."/>
            <person name="Sun L."/>
            <person name="Chen S."/>
            <person name="Nie H."/>
            <person name="Peng J."/>
            <person name="Xu J."/>
            <person name="Wang Y."/>
            <person name="Yuan Z."/>
            <person name="Wen Y."/>
            <person name="Yao Z."/>
            <person name="Shen Y."/>
            <person name="Qiang B."/>
            <person name="Hou Y."/>
            <person name="Yu J."/>
            <person name="Jin Q."/>
        </authorList>
    </citation>
    <scope>NUCLEOTIDE SEQUENCE [LARGE SCALE GENOMIC DNA]</scope>
    <source>
        <strain>Sd197</strain>
    </source>
</reference>
<name>CCME_SHIDS</name>
<feature type="chain" id="PRO_0000238866" description="Cytochrome c-type biogenesis protein CcmE">
    <location>
        <begin position="1"/>
        <end position="159"/>
    </location>
</feature>
<feature type="topological domain" description="Cytoplasmic" evidence="1">
    <location>
        <begin position="1"/>
        <end position="8"/>
    </location>
</feature>
<feature type="transmembrane region" description="Helical; Signal-anchor for type II membrane protein" evidence="1">
    <location>
        <begin position="9"/>
        <end position="29"/>
    </location>
</feature>
<feature type="topological domain" description="Periplasmic" evidence="1">
    <location>
        <begin position="30"/>
        <end position="159"/>
    </location>
</feature>
<feature type="region of interest" description="Disordered" evidence="2">
    <location>
        <begin position="132"/>
        <end position="159"/>
    </location>
</feature>
<feature type="compositionally biased region" description="Basic and acidic residues" evidence="2">
    <location>
        <begin position="132"/>
        <end position="147"/>
    </location>
</feature>
<feature type="binding site" description="covalent" evidence="1">
    <location>
        <position position="130"/>
    </location>
    <ligand>
        <name>heme</name>
        <dbReference type="ChEBI" id="CHEBI:30413"/>
    </ligand>
</feature>
<feature type="binding site" description="axial binding residue" evidence="1">
    <location>
        <position position="134"/>
    </location>
    <ligand>
        <name>heme</name>
        <dbReference type="ChEBI" id="CHEBI:30413"/>
    </ligand>
    <ligandPart>
        <name>Fe</name>
        <dbReference type="ChEBI" id="CHEBI:18248"/>
    </ligandPart>
</feature>
<accession>Q32HZ7</accession>
<gene>
    <name evidence="1" type="primary">ccmE</name>
    <name evidence="1" type="synonym">cycJ</name>
    <name type="ordered locus">SDY_0881</name>
</gene>
<dbReference type="EMBL" id="CP000034">
    <property type="protein sequence ID" value="ABB61058.1"/>
    <property type="molecule type" value="Genomic_DNA"/>
</dbReference>
<dbReference type="RefSeq" id="WP_001026418.1">
    <property type="nucleotide sequence ID" value="NC_007606.1"/>
</dbReference>
<dbReference type="RefSeq" id="YP_402549.1">
    <property type="nucleotide sequence ID" value="NC_007606.1"/>
</dbReference>
<dbReference type="SMR" id="Q32HZ7"/>
<dbReference type="STRING" id="300267.SDY_0881"/>
<dbReference type="EnsemblBacteria" id="ABB61058">
    <property type="protein sequence ID" value="ABB61058"/>
    <property type="gene ID" value="SDY_0881"/>
</dbReference>
<dbReference type="GeneID" id="86860369"/>
<dbReference type="KEGG" id="sdy:SDY_0881"/>
<dbReference type="PATRIC" id="fig|300267.13.peg.1016"/>
<dbReference type="HOGENOM" id="CLU_079503_1_0_6"/>
<dbReference type="Proteomes" id="UP000002716">
    <property type="component" value="Chromosome"/>
</dbReference>
<dbReference type="GO" id="GO:0005886">
    <property type="term" value="C:plasma membrane"/>
    <property type="evidence" value="ECO:0007669"/>
    <property type="project" value="UniProtKB-SubCell"/>
</dbReference>
<dbReference type="GO" id="GO:0020037">
    <property type="term" value="F:heme binding"/>
    <property type="evidence" value="ECO:0007669"/>
    <property type="project" value="InterPro"/>
</dbReference>
<dbReference type="GO" id="GO:0046872">
    <property type="term" value="F:metal ion binding"/>
    <property type="evidence" value="ECO:0007669"/>
    <property type="project" value="UniProtKB-KW"/>
</dbReference>
<dbReference type="GO" id="GO:0017004">
    <property type="term" value="P:cytochrome complex assembly"/>
    <property type="evidence" value="ECO:0007669"/>
    <property type="project" value="UniProtKB-KW"/>
</dbReference>
<dbReference type="FunFam" id="2.40.50.140:FF:000104">
    <property type="entry name" value="Cytochrome c-type biogenesis protein CcmE"/>
    <property type="match status" value="1"/>
</dbReference>
<dbReference type="Gene3D" id="2.40.50.140">
    <property type="entry name" value="Nucleic acid-binding proteins"/>
    <property type="match status" value="1"/>
</dbReference>
<dbReference type="HAMAP" id="MF_01959">
    <property type="entry name" value="CcmE"/>
    <property type="match status" value="1"/>
</dbReference>
<dbReference type="InterPro" id="IPR004329">
    <property type="entry name" value="CcmE"/>
</dbReference>
<dbReference type="InterPro" id="IPR036127">
    <property type="entry name" value="CcmE-like_sf"/>
</dbReference>
<dbReference type="InterPro" id="IPR012340">
    <property type="entry name" value="NA-bd_OB-fold"/>
</dbReference>
<dbReference type="NCBIfam" id="NF009635">
    <property type="entry name" value="PRK13150.1"/>
    <property type="match status" value="1"/>
</dbReference>
<dbReference type="NCBIfam" id="NF009638">
    <property type="entry name" value="PRK13165.1"/>
    <property type="match status" value="1"/>
</dbReference>
<dbReference type="NCBIfam" id="NF009727">
    <property type="entry name" value="PRK13254.1-1"/>
    <property type="match status" value="1"/>
</dbReference>
<dbReference type="NCBIfam" id="NF009729">
    <property type="entry name" value="PRK13254.1-3"/>
    <property type="match status" value="1"/>
</dbReference>
<dbReference type="PANTHER" id="PTHR34128">
    <property type="entry name" value="CYTOCHROME C-TYPE BIOGENESIS PROTEIN CCME HOMOLOG, MITOCHONDRIAL"/>
    <property type="match status" value="1"/>
</dbReference>
<dbReference type="PANTHER" id="PTHR34128:SF2">
    <property type="entry name" value="CYTOCHROME C-TYPE BIOGENESIS PROTEIN CCME HOMOLOG, MITOCHONDRIAL"/>
    <property type="match status" value="1"/>
</dbReference>
<dbReference type="Pfam" id="PF03100">
    <property type="entry name" value="CcmE"/>
    <property type="match status" value="1"/>
</dbReference>
<dbReference type="SUPFAM" id="SSF82093">
    <property type="entry name" value="Heme chaperone CcmE"/>
    <property type="match status" value="1"/>
</dbReference>